<comment type="function">
    <text evidence="2">Nuclease required for the repair of DNA interstrand cross-links (ICL) recruited at sites of DNA damage by monoubiquitinated FANCD2. Specifically involved in repair of ICL-induced DNA breaks by being required for efficient homologous recombination, probably in the resolution of homologous recombination intermediates. Acts as a 5'-3' exonuclease that anchors at a cut end of DNA and cleaves DNA successively at every third nucleotide, allowing to excise an ICL from one strand through flanking incisions. Probably keeps excising with 3'-flap annealing until it reaches and unhooks the ICL. Acts at sites that have a 5'-terminal phosphate anchor at a nick or a 1- or 2-nucleotide flap and is augmented by a 3' flap. Also has endonuclease activity toward 5'-flaps.</text>
</comment>
<comment type="catalytic activity">
    <reaction evidence="2">
        <text>Hydrolytically removes 5'-nucleotides successively from the 3'-hydroxy termini of 3'-hydroxy-terminated oligonucleotides.</text>
        <dbReference type="EC" id="3.1.4.1"/>
    </reaction>
</comment>
<comment type="cofactor">
    <cofactor evidence="2">
        <name>Mn(2+)</name>
        <dbReference type="ChEBI" id="CHEBI:29035"/>
    </cofactor>
    <cofactor evidence="2">
        <name>Mg(2+)</name>
        <dbReference type="ChEBI" id="CHEBI:18420"/>
    </cofactor>
    <text evidence="1 2">Binds 2 magnesium or manganese ions per subunit.</text>
</comment>
<comment type="subunit">
    <text evidence="2">Interacts with fancd2 (when monoubiquitinated).</text>
</comment>
<comment type="subcellular location">
    <subcellularLocation>
        <location evidence="2">Nucleus</location>
    </subcellularLocation>
    <text evidence="2">Localizes at sites of DNA damage following recruitment by monoubiquitinated fancd2.</text>
</comment>
<comment type="domain">
    <text evidence="2">The UBZ4-type zinc finger specifically binds monoubiquitinated fancd2.</text>
</comment>
<comment type="disruption phenotype">
    <text evidence="6">Increased DNA damage response, apoptosis and development of abnormalities such as kidney cysts.</text>
</comment>
<comment type="similarity">
    <text evidence="7">Belongs to the FAN1 family.</text>
</comment>
<reference key="1">
    <citation type="journal article" date="2013" name="Nature">
        <title>The zebrafish reference genome sequence and its relationship to the human genome.</title>
        <authorList>
            <person name="Howe K."/>
            <person name="Clark M.D."/>
            <person name="Torroja C.F."/>
            <person name="Torrance J."/>
            <person name="Berthelot C."/>
            <person name="Muffato M."/>
            <person name="Collins J.E."/>
            <person name="Humphray S."/>
            <person name="McLaren K."/>
            <person name="Matthews L."/>
            <person name="McLaren S."/>
            <person name="Sealy I."/>
            <person name="Caccamo M."/>
            <person name="Churcher C."/>
            <person name="Scott C."/>
            <person name="Barrett J.C."/>
            <person name="Koch R."/>
            <person name="Rauch G.J."/>
            <person name="White S."/>
            <person name="Chow W."/>
            <person name="Kilian B."/>
            <person name="Quintais L.T."/>
            <person name="Guerra-Assuncao J.A."/>
            <person name="Zhou Y."/>
            <person name="Gu Y."/>
            <person name="Yen J."/>
            <person name="Vogel J.H."/>
            <person name="Eyre T."/>
            <person name="Redmond S."/>
            <person name="Banerjee R."/>
            <person name="Chi J."/>
            <person name="Fu B."/>
            <person name="Langley E."/>
            <person name="Maguire S.F."/>
            <person name="Laird G.K."/>
            <person name="Lloyd D."/>
            <person name="Kenyon E."/>
            <person name="Donaldson S."/>
            <person name="Sehra H."/>
            <person name="Almeida-King J."/>
            <person name="Loveland J."/>
            <person name="Trevanion S."/>
            <person name="Jones M."/>
            <person name="Quail M."/>
            <person name="Willey D."/>
            <person name="Hunt A."/>
            <person name="Burton J."/>
            <person name="Sims S."/>
            <person name="McLay K."/>
            <person name="Plumb B."/>
            <person name="Davis J."/>
            <person name="Clee C."/>
            <person name="Oliver K."/>
            <person name="Clark R."/>
            <person name="Riddle C."/>
            <person name="Elliot D."/>
            <person name="Threadgold G."/>
            <person name="Harden G."/>
            <person name="Ware D."/>
            <person name="Begum S."/>
            <person name="Mortimore B."/>
            <person name="Kerry G."/>
            <person name="Heath P."/>
            <person name="Phillimore B."/>
            <person name="Tracey A."/>
            <person name="Corby N."/>
            <person name="Dunn M."/>
            <person name="Johnson C."/>
            <person name="Wood J."/>
            <person name="Clark S."/>
            <person name="Pelan S."/>
            <person name="Griffiths G."/>
            <person name="Smith M."/>
            <person name="Glithero R."/>
            <person name="Howden P."/>
            <person name="Barker N."/>
            <person name="Lloyd C."/>
            <person name="Stevens C."/>
            <person name="Harley J."/>
            <person name="Holt K."/>
            <person name="Panagiotidis G."/>
            <person name="Lovell J."/>
            <person name="Beasley H."/>
            <person name="Henderson C."/>
            <person name="Gordon D."/>
            <person name="Auger K."/>
            <person name="Wright D."/>
            <person name="Collins J."/>
            <person name="Raisen C."/>
            <person name="Dyer L."/>
            <person name="Leung K."/>
            <person name="Robertson L."/>
            <person name="Ambridge K."/>
            <person name="Leongamornlert D."/>
            <person name="McGuire S."/>
            <person name="Gilderthorp R."/>
            <person name="Griffiths C."/>
            <person name="Manthravadi D."/>
            <person name="Nichol S."/>
            <person name="Barker G."/>
            <person name="Whitehead S."/>
            <person name="Kay M."/>
            <person name="Brown J."/>
            <person name="Murnane C."/>
            <person name="Gray E."/>
            <person name="Humphries M."/>
            <person name="Sycamore N."/>
            <person name="Barker D."/>
            <person name="Saunders D."/>
            <person name="Wallis J."/>
            <person name="Babbage A."/>
            <person name="Hammond S."/>
            <person name="Mashreghi-Mohammadi M."/>
            <person name="Barr L."/>
            <person name="Martin S."/>
            <person name="Wray P."/>
            <person name="Ellington A."/>
            <person name="Matthews N."/>
            <person name="Ellwood M."/>
            <person name="Woodmansey R."/>
            <person name="Clark G."/>
            <person name="Cooper J."/>
            <person name="Tromans A."/>
            <person name="Grafham D."/>
            <person name="Skuce C."/>
            <person name="Pandian R."/>
            <person name="Andrews R."/>
            <person name="Harrison E."/>
            <person name="Kimberley A."/>
            <person name="Garnett J."/>
            <person name="Fosker N."/>
            <person name="Hall R."/>
            <person name="Garner P."/>
            <person name="Kelly D."/>
            <person name="Bird C."/>
            <person name="Palmer S."/>
            <person name="Gehring I."/>
            <person name="Berger A."/>
            <person name="Dooley C.M."/>
            <person name="Ersan-Urun Z."/>
            <person name="Eser C."/>
            <person name="Geiger H."/>
            <person name="Geisler M."/>
            <person name="Karotki L."/>
            <person name="Kirn A."/>
            <person name="Konantz J."/>
            <person name="Konantz M."/>
            <person name="Oberlander M."/>
            <person name="Rudolph-Geiger S."/>
            <person name="Teucke M."/>
            <person name="Lanz C."/>
            <person name="Raddatz G."/>
            <person name="Osoegawa K."/>
            <person name="Zhu B."/>
            <person name="Rapp A."/>
            <person name="Widaa S."/>
            <person name="Langford C."/>
            <person name="Yang F."/>
            <person name="Schuster S.C."/>
            <person name="Carter N.P."/>
            <person name="Harrow J."/>
            <person name="Ning Z."/>
            <person name="Herrero J."/>
            <person name="Searle S.M."/>
            <person name="Enright A."/>
            <person name="Geisler R."/>
            <person name="Plasterk R.H."/>
            <person name="Lee C."/>
            <person name="Westerfield M."/>
            <person name="de Jong P.J."/>
            <person name="Zon L.I."/>
            <person name="Postlethwait J.H."/>
            <person name="Nusslein-Volhard C."/>
            <person name="Hubbard T.J."/>
            <person name="Roest Crollius H."/>
            <person name="Rogers J."/>
            <person name="Stemple D.L."/>
        </authorList>
    </citation>
    <scope>NUCLEOTIDE SEQUENCE [LARGE SCALE GENOMIC DNA]</scope>
    <source>
        <strain>Tuebingen</strain>
    </source>
</reference>
<reference key="2">
    <citation type="submission" date="2007-08" db="EMBL/GenBank/DDBJ databases">
        <authorList>
            <consortium name="NIH - Zebrafish Gene Collection (ZGC) project"/>
        </authorList>
    </citation>
    <scope>NUCLEOTIDE SEQUENCE [LARGE SCALE MRNA]</scope>
    <source>
        <tissue>Embryo</tissue>
    </source>
</reference>
<reference key="3">
    <citation type="journal article" date="2012" name="Nat. Genet.">
        <title>FAN1 mutations cause karyomegalic interstitial nephritis, linking chronic kidney failure to defective DNA damage repair.</title>
        <authorList>
            <person name="Zhou W."/>
            <person name="Otto E.A."/>
            <person name="Cluckey A."/>
            <person name="Airik R."/>
            <person name="Hurd T.W."/>
            <person name="Chaki M."/>
            <person name="Diaz K."/>
            <person name="Lach F.P."/>
            <person name="Bennett G.R."/>
            <person name="Gee H.Y."/>
            <person name="Ghosh A.K."/>
            <person name="Natarajan S."/>
            <person name="Thongthip S."/>
            <person name="Veturi U."/>
            <person name="Allen S.J."/>
            <person name="Janssen S."/>
            <person name="Ramaswami G."/>
            <person name="Dixon J."/>
            <person name="Burkhalter F."/>
            <person name="Spoendlin M."/>
            <person name="Moch H."/>
            <person name="Mihatsch M.J."/>
            <person name="Verine J."/>
            <person name="Reade R."/>
            <person name="Soliman H."/>
            <person name="Godin M."/>
            <person name="Kiss D."/>
            <person name="Monga G."/>
            <person name="Mazzucco G."/>
            <person name="Amann K."/>
            <person name="Artunc F."/>
            <person name="Newland R.C."/>
            <person name="Wiech T."/>
            <person name="Zschiedrich S."/>
            <person name="Huber T.B."/>
            <person name="Friedl A."/>
            <person name="Slaats G.G."/>
            <person name="Joles J.A."/>
            <person name="Goldschmeding R."/>
            <person name="Washburn J."/>
            <person name="Giles R.H."/>
            <person name="Levy S."/>
            <person name="Smogorzewska A."/>
            <person name="Hildebrandt F."/>
        </authorList>
    </citation>
    <scope>DISRUPTION PHENOTYPE</scope>
</reference>
<sequence length="988" mass="110984">MESQTGRKSARRLSMTKKKSQSVCPIKERTSNGGAASITSFFRNTPPSKLACPLCGKLVPRYKINEHIDSQCQNFLVEDDGKQKEITKAPSNSALASNNEREKSPGDKDADTSPFFKKNCAVRRDSSETDSQAKPVKTVGLGSLSSKLSRRALRLSDESGVNLTRVSDNEKDHNADLNRSQKENCMNSLTFGSERNGTDADNILETEPEASNQPQLKNVEKSASDSSISSDVHTSSSSVLKRKSMEIPKNDTNTTETCIAHKKSRFFQSSIERGDESKVKSDQTEASSSAYDVPTSKSPIKSKTTQEEIEKELNKTPANEHNMLDVEKVGEGSEQQPTRLPYYLRNFRTVLEAVLENEDDRRLFNEDDFSTIQSFQQLSVPGQMLYVRLFQRKLKWLQVCKVEYTEISTDLRPVVQELVACGFLQTESELHDLHEVLDLLPAPELRNLAKTFHLGRGGSQKQQLVEGLLQLGKQRSLFAGQNNTAAVILKRAKQAAGSCVRLCRSSRVVFSRVLLLFTLTDTLEEEDLASGGQGQLYTILLVNSGRLAFPEYTVHRSARLFKDRDDLIRYETAMRALQEVIAAMQSGSWEDAYDLYTTAMAAWQEIKDSCDLSHQEQLPVFLRCFTVGWTYTRILSRGVEILQRLKRYEDAVEQLRNLLSQSVYCVDSRGRWWDRLALNLQQHLKQHEQAIGAIRDGLNDPLARTGHKLSLYQRASRMKESASLKKYRLLLRDLPTVHVQDVTHVTIRGQLFPHEGGMGKSVFLRAASEDEGSGGGQGTVLMCSVEDLALEHYRTLGFDQGIHGEGSTFSTLFGLLMWDIIFMDGVPDVFLNPYQTCPLDLHTDCFYGSRREAIEARAEMLREASVETLQDLIADVWSTQEGRVCALINWERFSTPQQAQSLVACLGGHFLSGVFLRMAKDYRHCRGGLPDLVVWSTSSNKYKLVEVKGPNDRLSQKQQIWLDELRKLGADVEVCHVTATGARGARRE</sequence>
<protein>
    <recommendedName>
        <fullName evidence="2">Fanconi-associated nuclease 1</fullName>
        <ecNumber evidence="2">3.1.21.-</ecNumber>
        <ecNumber evidence="2">3.1.4.1</ecNumber>
    </recommendedName>
    <alternativeName>
        <fullName evidence="2">FANCD2/FANCI-associated nuclease 1</fullName>
    </alternativeName>
    <alternativeName>
        <fullName>Myotubularin-related protein 15</fullName>
    </alternativeName>
</protein>
<dbReference type="EC" id="3.1.21.-" evidence="2"/>
<dbReference type="EC" id="3.1.4.1" evidence="2"/>
<dbReference type="EMBL" id="BX548157">
    <property type="protein sequence ID" value="CAK04388.1"/>
    <property type="molecule type" value="Genomic_DNA"/>
</dbReference>
<dbReference type="EMBL" id="CT025908">
    <property type="protein sequence ID" value="CAN88260.1"/>
    <property type="molecule type" value="Genomic_DNA"/>
</dbReference>
<dbReference type="EMBL" id="BC151826">
    <property type="protein sequence ID" value="AAI51827.1"/>
    <property type="molecule type" value="mRNA"/>
</dbReference>
<dbReference type="RefSeq" id="NP_001038546.2">
    <property type="nucleotide sequence ID" value="NM_001045081.2"/>
</dbReference>
<dbReference type="SMR" id="Q1LWH4"/>
<dbReference type="FunCoup" id="Q1LWH4">
    <property type="interactions" value="1723"/>
</dbReference>
<dbReference type="STRING" id="7955.ENSDARP00000084286"/>
<dbReference type="PaxDb" id="7955-ENSDARP00000084286"/>
<dbReference type="GeneID" id="565458"/>
<dbReference type="KEGG" id="dre:565458"/>
<dbReference type="AGR" id="ZFIN:ZDB-GENE-030131-6225"/>
<dbReference type="CTD" id="22909"/>
<dbReference type="ZFIN" id="ZDB-GENE-030131-6225">
    <property type="gene designation" value="fan1"/>
</dbReference>
<dbReference type="eggNOG" id="KOG2143">
    <property type="taxonomic scope" value="Eukaryota"/>
</dbReference>
<dbReference type="InParanoid" id="Q1LWH4"/>
<dbReference type="OrthoDB" id="76364at2759"/>
<dbReference type="PhylomeDB" id="Q1LWH4"/>
<dbReference type="TreeFam" id="TF312870"/>
<dbReference type="PRO" id="PR:Q1LWH4"/>
<dbReference type="Proteomes" id="UP000000437">
    <property type="component" value="Alternate scaffold 18"/>
</dbReference>
<dbReference type="Proteomes" id="UP000000437">
    <property type="component" value="Chromosome 18"/>
</dbReference>
<dbReference type="GO" id="GO:0005634">
    <property type="term" value="C:nucleus"/>
    <property type="evidence" value="ECO:0000250"/>
    <property type="project" value="UniProtKB"/>
</dbReference>
<dbReference type="GO" id="GO:0008409">
    <property type="term" value="F:5'-3' exonuclease activity"/>
    <property type="evidence" value="ECO:0000250"/>
    <property type="project" value="UniProtKB"/>
</dbReference>
<dbReference type="GO" id="GO:0017108">
    <property type="term" value="F:5'-flap endonuclease activity"/>
    <property type="evidence" value="ECO:0000250"/>
    <property type="project" value="UniProtKB"/>
</dbReference>
<dbReference type="GO" id="GO:0070336">
    <property type="term" value="F:flap-structured DNA binding"/>
    <property type="evidence" value="ECO:0000250"/>
    <property type="project" value="UniProtKB"/>
</dbReference>
<dbReference type="GO" id="GO:0004528">
    <property type="term" value="F:phosphodiesterase I activity"/>
    <property type="evidence" value="ECO:0007669"/>
    <property type="project" value="UniProtKB-EC"/>
</dbReference>
<dbReference type="GO" id="GO:0140036">
    <property type="term" value="F:ubiquitin-modified protein reader activity"/>
    <property type="evidence" value="ECO:0000250"/>
    <property type="project" value="UniProtKB"/>
</dbReference>
<dbReference type="GO" id="GO:0008270">
    <property type="term" value="F:zinc ion binding"/>
    <property type="evidence" value="ECO:0007669"/>
    <property type="project" value="UniProtKB-KW"/>
</dbReference>
<dbReference type="GO" id="GO:0006281">
    <property type="term" value="P:DNA repair"/>
    <property type="evidence" value="ECO:0000250"/>
    <property type="project" value="UniProtKB"/>
</dbReference>
<dbReference type="GO" id="GO:0000724">
    <property type="term" value="P:double-strand break repair via homologous recombination"/>
    <property type="evidence" value="ECO:0000250"/>
    <property type="project" value="UniProtKB"/>
</dbReference>
<dbReference type="GO" id="GO:0036297">
    <property type="term" value="P:interstrand cross-link repair"/>
    <property type="evidence" value="ECO:0000250"/>
    <property type="project" value="UniProtKB"/>
</dbReference>
<dbReference type="GO" id="GO:0006289">
    <property type="term" value="P:nucleotide-excision repair"/>
    <property type="evidence" value="ECO:0000250"/>
    <property type="project" value="UniProtKB"/>
</dbReference>
<dbReference type="CDD" id="cd22326">
    <property type="entry name" value="FAN1-like"/>
    <property type="match status" value="1"/>
</dbReference>
<dbReference type="FunFam" id="3.40.1350.10:FF:000004">
    <property type="entry name" value="Fanconi-associated nuclease"/>
    <property type="match status" value="1"/>
</dbReference>
<dbReference type="Gene3D" id="3.40.1350.10">
    <property type="match status" value="1"/>
</dbReference>
<dbReference type="Gene3D" id="1.25.40.10">
    <property type="entry name" value="Tetratricopeptide repeat domain"/>
    <property type="match status" value="1"/>
</dbReference>
<dbReference type="InterPro" id="IPR033315">
    <property type="entry name" value="Fan1-like"/>
</dbReference>
<dbReference type="InterPro" id="IPR049132">
    <property type="entry name" value="FAN1-like_euk"/>
</dbReference>
<dbReference type="InterPro" id="IPR049126">
    <property type="entry name" value="FAN1-like_TPR"/>
</dbReference>
<dbReference type="InterPro" id="IPR049125">
    <property type="entry name" value="FAN1-like_WH"/>
</dbReference>
<dbReference type="InterPro" id="IPR049138">
    <property type="entry name" value="Fan1_SAP_met"/>
</dbReference>
<dbReference type="InterPro" id="IPR006642">
    <property type="entry name" value="Rad18_UBZ4"/>
</dbReference>
<dbReference type="InterPro" id="IPR011990">
    <property type="entry name" value="TPR-like_helical_dom_sf"/>
</dbReference>
<dbReference type="InterPro" id="IPR011856">
    <property type="entry name" value="tRNA_endonuc-like_dom_sf"/>
</dbReference>
<dbReference type="InterPro" id="IPR014883">
    <property type="entry name" value="VRR_NUC"/>
</dbReference>
<dbReference type="PANTHER" id="PTHR15749">
    <property type="entry name" value="FANCONI-ASSOCIATED NUCLEASE 1"/>
    <property type="match status" value="1"/>
</dbReference>
<dbReference type="PANTHER" id="PTHR15749:SF4">
    <property type="entry name" value="FANCONI-ASSOCIATED NUCLEASE 1"/>
    <property type="match status" value="1"/>
</dbReference>
<dbReference type="Pfam" id="PF21315">
    <property type="entry name" value="FAN1_HTH"/>
    <property type="match status" value="1"/>
</dbReference>
<dbReference type="Pfam" id="PF21169">
    <property type="entry name" value="Fan1_SAP"/>
    <property type="match status" value="1"/>
</dbReference>
<dbReference type="Pfam" id="PF21170">
    <property type="entry name" value="FAN1_TPR"/>
    <property type="match status" value="1"/>
</dbReference>
<dbReference type="Pfam" id="PF08774">
    <property type="entry name" value="VRR_NUC"/>
    <property type="match status" value="1"/>
</dbReference>
<dbReference type="SMART" id="SM00990">
    <property type="entry name" value="VRR_NUC"/>
    <property type="match status" value="1"/>
</dbReference>
<dbReference type="SMART" id="SM00734">
    <property type="entry name" value="ZnF_Rad18"/>
    <property type="match status" value="1"/>
</dbReference>
<dbReference type="PROSITE" id="PS51908">
    <property type="entry name" value="ZF_UBZ4"/>
    <property type="match status" value="1"/>
</dbReference>
<evidence type="ECO:0000250" key="1">
    <source>
        <dbReference type="UniProtKB" id="Q9I2N0"/>
    </source>
</evidence>
<evidence type="ECO:0000250" key="2">
    <source>
        <dbReference type="UniProtKB" id="Q9Y2M0"/>
    </source>
</evidence>
<evidence type="ECO:0000255" key="3"/>
<evidence type="ECO:0000255" key="4">
    <source>
        <dbReference type="PROSITE-ProRule" id="PRU01256"/>
    </source>
</evidence>
<evidence type="ECO:0000256" key="5">
    <source>
        <dbReference type="SAM" id="MobiDB-lite"/>
    </source>
</evidence>
<evidence type="ECO:0000269" key="6">
    <source>
    </source>
</evidence>
<evidence type="ECO:0000305" key="7"/>
<gene>
    <name type="primary">fan1</name>
    <name type="synonym">mtmr15</name>
    <name type="ORF">si:ch211-163b1.2</name>
    <name type="ORF">si:ch211-201b11.2</name>
</gene>
<keyword id="KW-0175">Coiled coil</keyword>
<keyword id="KW-0227">DNA damage</keyword>
<keyword id="KW-0234">DNA repair</keyword>
<keyword id="KW-0255">Endonuclease</keyword>
<keyword id="KW-0269">Exonuclease</keyword>
<keyword id="KW-0378">Hydrolase</keyword>
<keyword id="KW-0460">Magnesium</keyword>
<keyword id="KW-0464">Manganese</keyword>
<keyword id="KW-0479">Metal-binding</keyword>
<keyword id="KW-0540">Nuclease</keyword>
<keyword id="KW-0539">Nucleus</keyword>
<keyword id="KW-1185">Reference proteome</keyword>
<keyword id="KW-0862">Zinc</keyword>
<keyword id="KW-0863">Zinc-finger</keyword>
<accession>Q1LWH4</accession>
<accession>A5WVQ6</accession>
<accession>A7MBL6</accession>
<accession>T1ECT2</accession>
<organism>
    <name type="scientific">Danio rerio</name>
    <name type="common">Zebrafish</name>
    <name type="synonym">Brachydanio rerio</name>
    <dbReference type="NCBI Taxonomy" id="7955"/>
    <lineage>
        <taxon>Eukaryota</taxon>
        <taxon>Metazoa</taxon>
        <taxon>Chordata</taxon>
        <taxon>Craniata</taxon>
        <taxon>Vertebrata</taxon>
        <taxon>Euteleostomi</taxon>
        <taxon>Actinopterygii</taxon>
        <taxon>Neopterygii</taxon>
        <taxon>Teleostei</taxon>
        <taxon>Ostariophysi</taxon>
        <taxon>Cypriniformes</taxon>
        <taxon>Danionidae</taxon>
        <taxon>Danioninae</taxon>
        <taxon>Danio</taxon>
    </lineage>
</organism>
<proteinExistence type="evidence at transcript level"/>
<name>FAN1_DANRE</name>
<feature type="chain" id="PRO_0000311226" description="Fanconi-associated nuclease 1">
    <location>
        <begin position="1"/>
        <end position="988"/>
    </location>
</feature>
<feature type="domain" description="VRR-NUC">
    <location>
        <begin position="866"/>
        <end position="978"/>
    </location>
</feature>
<feature type="zinc finger region" description="UBZ4-type" evidence="4">
    <location>
        <begin position="49"/>
        <end position="77"/>
    </location>
</feature>
<feature type="region of interest" description="Disordered" evidence="5">
    <location>
        <begin position="1"/>
        <end position="39"/>
    </location>
</feature>
<feature type="region of interest" description="Disordered" evidence="5">
    <location>
        <begin position="87"/>
        <end position="115"/>
    </location>
</feature>
<feature type="region of interest" description="Disordered" evidence="5">
    <location>
        <begin position="164"/>
        <end position="256"/>
    </location>
</feature>
<feature type="region of interest" description="Disordered" evidence="5">
    <location>
        <begin position="269"/>
        <end position="307"/>
    </location>
</feature>
<feature type="coiled-coil region" evidence="3">
    <location>
        <begin position="636"/>
        <end position="663"/>
    </location>
</feature>
<feature type="compositionally biased region" description="Basic residues" evidence="5">
    <location>
        <begin position="8"/>
        <end position="20"/>
    </location>
</feature>
<feature type="compositionally biased region" description="Polar residues" evidence="5">
    <location>
        <begin position="89"/>
        <end position="98"/>
    </location>
</feature>
<feature type="compositionally biased region" description="Basic and acidic residues" evidence="5">
    <location>
        <begin position="99"/>
        <end position="111"/>
    </location>
</feature>
<feature type="compositionally biased region" description="Basic and acidic residues" evidence="5">
    <location>
        <begin position="167"/>
        <end position="182"/>
    </location>
</feature>
<feature type="compositionally biased region" description="Polar residues" evidence="5">
    <location>
        <begin position="183"/>
        <end position="195"/>
    </location>
</feature>
<feature type="compositionally biased region" description="Low complexity" evidence="5">
    <location>
        <begin position="224"/>
        <end position="238"/>
    </location>
</feature>
<feature type="compositionally biased region" description="Basic and acidic residues" evidence="5">
    <location>
        <begin position="272"/>
        <end position="283"/>
    </location>
</feature>
<feature type="compositionally biased region" description="Polar residues" evidence="5">
    <location>
        <begin position="284"/>
        <end position="303"/>
    </location>
</feature>
<feature type="binding site" evidence="4">
    <location>
        <position position="52"/>
    </location>
    <ligand>
        <name>Zn(2+)</name>
        <dbReference type="ChEBI" id="CHEBI:29105"/>
    </ligand>
</feature>
<feature type="binding site" evidence="4">
    <location>
        <position position="55"/>
    </location>
    <ligand>
        <name>Zn(2+)</name>
        <dbReference type="ChEBI" id="CHEBI:29105"/>
    </ligand>
</feature>
<feature type="binding site" evidence="4">
    <location>
        <position position="67"/>
    </location>
    <ligand>
        <name>Zn(2+)</name>
        <dbReference type="ChEBI" id="CHEBI:29105"/>
    </ligand>
</feature>
<feature type="binding site" evidence="4">
    <location>
        <position position="72"/>
    </location>
    <ligand>
        <name>Zn(2+)</name>
        <dbReference type="ChEBI" id="CHEBI:29105"/>
    </ligand>
</feature>
<feature type="binding site" evidence="1">
    <location>
        <position position="805"/>
    </location>
    <ligand>
        <name>Mn(2+)</name>
        <dbReference type="ChEBI" id="CHEBI:29035"/>
        <label>2</label>
    </ligand>
</feature>
<feature type="binding site" evidence="1">
    <location>
        <position position="931"/>
    </location>
    <ligand>
        <name>Mn(2+)</name>
        <dbReference type="ChEBI" id="CHEBI:29035"/>
        <label>1</label>
    </ligand>
</feature>
<feature type="binding site" evidence="1">
    <location>
        <position position="931"/>
    </location>
    <ligand>
        <name>Mn(2+)</name>
        <dbReference type="ChEBI" id="CHEBI:29035"/>
        <label>2</label>
    </ligand>
</feature>
<feature type="binding site" evidence="1">
    <location>
        <position position="946"/>
    </location>
    <ligand>
        <name>Mn(2+)</name>
        <dbReference type="ChEBI" id="CHEBI:29035"/>
        <label>1</label>
    </ligand>
</feature>
<feature type="binding site" evidence="1">
    <location>
        <position position="947"/>
    </location>
    <ligand>
        <name>Mn(2+)</name>
        <dbReference type="ChEBI" id="CHEBI:29035"/>
        <label>1</label>
    </ligand>
</feature>
<feature type="sequence conflict" description="In Ref. 2; AAI51827." evidence="7" ref="2">
    <original>Q</original>
    <variation>L</variation>
    <location>
        <position position="4"/>
    </location>
</feature>
<feature type="sequence conflict" description="In Ref. 2; AAI51827." evidence="7" ref="2">
    <original>M</original>
    <variation>V</variation>
    <location>
        <position position="15"/>
    </location>
</feature>
<feature type="sequence conflict" description="In Ref. 1; CAN88260 and 2; AAI51827." evidence="7" ref="1 2">
    <original>R</original>
    <variation>H</variation>
    <location>
        <position position="165"/>
    </location>
</feature>
<feature type="sequence conflict" description="In Ref. 2; AAI51827." evidence="7" ref="2">
    <original>K</original>
    <variation>N</variation>
    <location>
        <position position="171"/>
    </location>
</feature>
<feature type="sequence conflict" description="In Ref. 1; CAN88260 and 2; AAI51827." evidence="7" ref="1 2">
    <original>D</original>
    <variation>E</variation>
    <location>
        <position position="176"/>
    </location>
</feature>
<feature type="sequence conflict" description="In Ref. 1; CAN88260 and 2; AAI51827." evidence="7" ref="1 2">
    <original>C</original>
    <variation>Y</variation>
    <location>
        <position position="185"/>
    </location>
</feature>
<feature type="sequence conflict" description="In Ref. 1; CAN88260." evidence="7" ref="1">
    <original>G</original>
    <variation>E</variation>
    <location>
        <position position="192"/>
    </location>
</feature>
<feature type="sequence conflict" description="In Ref. 1; CAN88260." evidence="7" ref="1">
    <original>I</original>
    <variation>M</variation>
    <location>
        <position position="203"/>
    </location>
</feature>
<feature type="sequence conflict" description="In Ref. 1; CAN88260." evidence="7" ref="1">
    <original>D</original>
    <variation>N</variation>
    <location>
        <position position="275"/>
    </location>
</feature>
<feature type="sequence conflict" description="In Ref. 1; CAN88260." evidence="7" ref="1">
    <original>P</original>
    <variation>H</variation>
    <location>
        <position position="337"/>
    </location>
</feature>
<feature type="sequence conflict" description="In Ref. 2; AAI51827." evidence="7" ref="2">
    <original>C</original>
    <variation>Y</variation>
    <location>
        <position position="400"/>
    </location>
</feature>
<feature type="sequence conflict" description="In Ref. 1; CAN88260." evidence="7" ref="1">
    <original>G</original>
    <variation>D</variation>
    <location>
        <position position="467"/>
    </location>
</feature>
<feature type="sequence conflict" description="In Ref. 2; AAI51827." evidence="7" ref="2">
    <original>D</original>
    <variation>A</variation>
    <location>
        <position position="591"/>
    </location>
</feature>
<feature type="sequence conflict" description="In Ref. 1; CAK04388 and 2; AAI51827." evidence="7" ref="1 2">
    <original>S</original>
    <variation>N</variation>
    <location>
        <position position="613"/>
    </location>
</feature>
<feature type="sequence conflict" description="In Ref. 1; CAN88260." evidence="7" ref="1">
    <original>T</original>
    <variation>N</variation>
    <location>
        <position position="632"/>
    </location>
</feature>
<feature type="sequence conflict" description="In Ref. 1; CAN88260." evidence="7" ref="1">
    <original>G</original>
    <variation>E</variation>
    <location>
        <position position="775"/>
    </location>
</feature>
<feature type="sequence conflict" description="In Ref. 1; CAN88260 and 2; AAI51827." evidence="7" ref="1 2">
    <original>L</original>
    <variation>V</variation>
    <location>
        <position position="781"/>
    </location>
</feature>
<feature type="sequence conflict" description="In Ref. 2; AAI51827." evidence="7" ref="2">
    <original>T</original>
    <variation>I</variation>
    <location>
        <position position="868"/>
    </location>
</feature>